<proteinExistence type="inferred from homology"/>
<protein>
    <recommendedName>
        <fullName evidence="1">Ribonuclease PH</fullName>
        <shortName evidence="1">RNase PH</shortName>
        <ecNumber evidence="1">2.7.7.56</ecNumber>
    </recommendedName>
    <alternativeName>
        <fullName evidence="1">tRNA nucleotidyltransferase</fullName>
    </alternativeName>
</protein>
<feature type="chain" id="PRO_1000024790" description="Ribonuclease PH">
    <location>
        <begin position="1"/>
        <end position="243"/>
    </location>
</feature>
<feature type="binding site" evidence="1">
    <location>
        <position position="91"/>
    </location>
    <ligand>
        <name>phosphate</name>
        <dbReference type="ChEBI" id="CHEBI:43474"/>
        <note>substrate</note>
    </ligand>
</feature>
<feature type="binding site" evidence="1">
    <location>
        <begin position="129"/>
        <end position="131"/>
    </location>
    <ligand>
        <name>phosphate</name>
        <dbReference type="ChEBI" id="CHEBI:43474"/>
        <note>substrate</note>
    </ligand>
</feature>
<name>RNPH_BURL3</name>
<accession>Q39IL4</accession>
<dbReference type="EC" id="2.7.7.56" evidence="1"/>
<dbReference type="EMBL" id="CP000151">
    <property type="protein sequence ID" value="ABB07702.1"/>
    <property type="molecule type" value="Genomic_DNA"/>
</dbReference>
<dbReference type="RefSeq" id="WP_011351282.1">
    <property type="nucleotide sequence ID" value="NC_007510.1"/>
</dbReference>
<dbReference type="SMR" id="Q39IL4"/>
<dbReference type="GeneID" id="45094002"/>
<dbReference type="KEGG" id="bur:Bcep18194_A4105"/>
<dbReference type="PATRIC" id="fig|482957.22.peg.990"/>
<dbReference type="HOGENOM" id="CLU_050858_0_0_4"/>
<dbReference type="Proteomes" id="UP000002705">
    <property type="component" value="Chromosome 1"/>
</dbReference>
<dbReference type="GO" id="GO:0000175">
    <property type="term" value="F:3'-5'-RNA exonuclease activity"/>
    <property type="evidence" value="ECO:0007669"/>
    <property type="project" value="UniProtKB-UniRule"/>
</dbReference>
<dbReference type="GO" id="GO:0000049">
    <property type="term" value="F:tRNA binding"/>
    <property type="evidence" value="ECO:0007669"/>
    <property type="project" value="UniProtKB-UniRule"/>
</dbReference>
<dbReference type="GO" id="GO:0009022">
    <property type="term" value="F:tRNA nucleotidyltransferase activity"/>
    <property type="evidence" value="ECO:0007669"/>
    <property type="project" value="UniProtKB-UniRule"/>
</dbReference>
<dbReference type="GO" id="GO:0016075">
    <property type="term" value="P:rRNA catabolic process"/>
    <property type="evidence" value="ECO:0007669"/>
    <property type="project" value="UniProtKB-UniRule"/>
</dbReference>
<dbReference type="GO" id="GO:0006364">
    <property type="term" value="P:rRNA processing"/>
    <property type="evidence" value="ECO:0007669"/>
    <property type="project" value="UniProtKB-KW"/>
</dbReference>
<dbReference type="GO" id="GO:0008033">
    <property type="term" value="P:tRNA processing"/>
    <property type="evidence" value="ECO:0007669"/>
    <property type="project" value="UniProtKB-UniRule"/>
</dbReference>
<dbReference type="CDD" id="cd11362">
    <property type="entry name" value="RNase_PH_bact"/>
    <property type="match status" value="1"/>
</dbReference>
<dbReference type="FunFam" id="3.30.230.70:FF:000003">
    <property type="entry name" value="Ribonuclease PH"/>
    <property type="match status" value="1"/>
</dbReference>
<dbReference type="Gene3D" id="3.30.230.70">
    <property type="entry name" value="GHMP Kinase, N-terminal domain"/>
    <property type="match status" value="1"/>
</dbReference>
<dbReference type="HAMAP" id="MF_00564">
    <property type="entry name" value="RNase_PH"/>
    <property type="match status" value="1"/>
</dbReference>
<dbReference type="InterPro" id="IPR001247">
    <property type="entry name" value="ExoRNase_PH_dom1"/>
</dbReference>
<dbReference type="InterPro" id="IPR015847">
    <property type="entry name" value="ExoRNase_PH_dom2"/>
</dbReference>
<dbReference type="InterPro" id="IPR036345">
    <property type="entry name" value="ExoRNase_PH_dom2_sf"/>
</dbReference>
<dbReference type="InterPro" id="IPR027408">
    <property type="entry name" value="PNPase/RNase_PH_dom_sf"/>
</dbReference>
<dbReference type="InterPro" id="IPR020568">
    <property type="entry name" value="Ribosomal_Su5_D2-typ_SF"/>
</dbReference>
<dbReference type="InterPro" id="IPR050080">
    <property type="entry name" value="RNase_PH"/>
</dbReference>
<dbReference type="InterPro" id="IPR002381">
    <property type="entry name" value="RNase_PH_bac-type"/>
</dbReference>
<dbReference type="InterPro" id="IPR018336">
    <property type="entry name" value="RNase_PH_CS"/>
</dbReference>
<dbReference type="NCBIfam" id="TIGR01966">
    <property type="entry name" value="RNasePH"/>
    <property type="match status" value="1"/>
</dbReference>
<dbReference type="PANTHER" id="PTHR11953">
    <property type="entry name" value="EXOSOME COMPLEX COMPONENT"/>
    <property type="match status" value="1"/>
</dbReference>
<dbReference type="PANTHER" id="PTHR11953:SF0">
    <property type="entry name" value="EXOSOME COMPLEX COMPONENT RRP41"/>
    <property type="match status" value="1"/>
</dbReference>
<dbReference type="Pfam" id="PF01138">
    <property type="entry name" value="RNase_PH"/>
    <property type="match status" value="1"/>
</dbReference>
<dbReference type="Pfam" id="PF03725">
    <property type="entry name" value="RNase_PH_C"/>
    <property type="match status" value="1"/>
</dbReference>
<dbReference type="SUPFAM" id="SSF55666">
    <property type="entry name" value="Ribonuclease PH domain 2-like"/>
    <property type="match status" value="1"/>
</dbReference>
<dbReference type="SUPFAM" id="SSF54211">
    <property type="entry name" value="Ribosomal protein S5 domain 2-like"/>
    <property type="match status" value="1"/>
</dbReference>
<dbReference type="PROSITE" id="PS01277">
    <property type="entry name" value="RIBONUCLEASE_PH"/>
    <property type="match status" value="1"/>
</dbReference>
<reference key="1">
    <citation type="submission" date="2005-10" db="EMBL/GenBank/DDBJ databases">
        <title>Complete sequence of chromosome 1 of Burkholderia sp. 383.</title>
        <authorList>
            <consortium name="US DOE Joint Genome Institute"/>
            <person name="Copeland A."/>
            <person name="Lucas S."/>
            <person name="Lapidus A."/>
            <person name="Barry K."/>
            <person name="Detter J.C."/>
            <person name="Glavina T."/>
            <person name="Hammon N."/>
            <person name="Israni S."/>
            <person name="Pitluck S."/>
            <person name="Chain P."/>
            <person name="Malfatti S."/>
            <person name="Shin M."/>
            <person name="Vergez L."/>
            <person name="Schmutz J."/>
            <person name="Larimer F."/>
            <person name="Land M."/>
            <person name="Kyrpides N."/>
            <person name="Lykidis A."/>
            <person name="Richardson P."/>
        </authorList>
    </citation>
    <scope>NUCLEOTIDE SEQUENCE [LARGE SCALE GENOMIC DNA]</scope>
    <source>
        <strain>ATCC 17760 / DSM 23089 / LMG 22485 / NCIMB 9086 / R18194 / 383</strain>
    </source>
</reference>
<organism>
    <name type="scientific">Burkholderia lata (strain ATCC 17760 / DSM 23089 / LMG 22485 / NCIMB 9086 / R18194 / 383)</name>
    <dbReference type="NCBI Taxonomy" id="482957"/>
    <lineage>
        <taxon>Bacteria</taxon>
        <taxon>Pseudomonadati</taxon>
        <taxon>Pseudomonadota</taxon>
        <taxon>Betaproteobacteria</taxon>
        <taxon>Burkholderiales</taxon>
        <taxon>Burkholderiaceae</taxon>
        <taxon>Burkholderia</taxon>
        <taxon>Burkholderia cepacia complex</taxon>
    </lineage>
</organism>
<evidence type="ECO:0000255" key="1">
    <source>
        <dbReference type="HAMAP-Rule" id="MF_00564"/>
    </source>
</evidence>
<keyword id="KW-0548">Nucleotidyltransferase</keyword>
<keyword id="KW-0694">RNA-binding</keyword>
<keyword id="KW-0698">rRNA processing</keyword>
<keyword id="KW-0808">Transferase</keyword>
<keyword id="KW-0819">tRNA processing</keyword>
<keyword id="KW-0820">tRNA-binding</keyword>
<comment type="function">
    <text evidence="1">Phosphorolytic 3'-5' exoribonuclease that plays an important role in tRNA 3'-end maturation. Removes nucleotide residues following the 3'-CCA terminus of tRNAs; can also add nucleotides to the ends of RNA molecules by using nucleoside diphosphates as substrates, but this may not be physiologically important. Probably plays a role in initiation of 16S rRNA degradation (leading to ribosome degradation) during starvation.</text>
</comment>
<comment type="catalytic activity">
    <reaction evidence="1">
        <text>tRNA(n+1) + phosphate = tRNA(n) + a ribonucleoside 5'-diphosphate</text>
        <dbReference type="Rhea" id="RHEA:10628"/>
        <dbReference type="Rhea" id="RHEA-COMP:17343"/>
        <dbReference type="Rhea" id="RHEA-COMP:17344"/>
        <dbReference type="ChEBI" id="CHEBI:43474"/>
        <dbReference type="ChEBI" id="CHEBI:57930"/>
        <dbReference type="ChEBI" id="CHEBI:173114"/>
        <dbReference type="EC" id="2.7.7.56"/>
    </reaction>
</comment>
<comment type="subunit">
    <text evidence="1">Homohexameric ring arranged as a trimer of dimers.</text>
</comment>
<comment type="similarity">
    <text evidence="1">Belongs to the RNase PH family.</text>
</comment>
<gene>
    <name evidence="1" type="primary">rph</name>
    <name type="ordered locus">Bcep18194_A4105</name>
</gene>
<sequence>MTSSVSRPSGRRADALRKVALTRHYTKHAEGSVLVEFGDTKVLCTASVSERVPDFLRDRGQGWLTAEYGMLPRATHTRSDREAARGKQTGRTQEIQRLIGRALRAVFDLEALGPRTIHIDCDVIQADGGTRTASITGAFVAAHDAVSKLIAAGKITRSPITDHVAAISVGVYEGAPVLDLDYAEDSQCDTDMNVVMTGAGGFVEVQGTAEGVPFSRAEMNALLDLAQGGIAELVQLQKDVLGA</sequence>